<name>RL40_LEITA</name>
<reference key="1">
    <citation type="journal article" date="1994" name="Gene">
        <title>Expression of the Leishmania tarentolae ubiquitin-encoding and mini-exon genes.</title>
        <authorList>
            <person name="Fleischmann J."/>
            <person name="Campbell D.A."/>
        </authorList>
    </citation>
    <scope>NUCLEOTIDE SEQUENCE [GENOMIC DNA]</scope>
    <source>
        <strain>UC</strain>
    </source>
</reference>
<dbReference type="EMBL" id="X73118">
    <property type="protein sequence ID" value="CAA51549.1"/>
    <property type="molecule type" value="Genomic_DNA"/>
</dbReference>
<dbReference type="PIR" id="A72790">
    <property type="entry name" value="S34332"/>
</dbReference>
<dbReference type="SMR" id="P69200"/>
<dbReference type="VEuPathDB" id="TriTrypDB:LtaPh_0909251"/>
<dbReference type="OrthoDB" id="428577at2759"/>
<dbReference type="GO" id="GO:0005737">
    <property type="term" value="C:cytoplasm"/>
    <property type="evidence" value="ECO:0007669"/>
    <property type="project" value="UniProtKB-SubCell"/>
</dbReference>
<dbReference type="GO" id="GO:0005634">
    <property type="term" value="C:nucleus"/>
    <property type="evidence" value="ECO:0007669"/>
    <property type="project" value="UniProtKB-SubCell"/>
</dbReference>
<dbReference type="GO" id="GO:1990904">
    <property type="term" value="C:ribonucleoprotein complex"/>
    <property type="evidence" value="ECO:0007669"/>
    <property type="project" value="UniProtKB-KW"/>
</dbReference>
<dbReference type="GO" id="GO:0005840">
    <property type="term" value="C:ribosome"/>
    <property type="evidence" value="ECO:0007669"/>
    <property type="project" value="UniProtKB-KW"/>
</dbReference>
<dbReference type="GO" id="GO:0003735">
    <property type="term" value="F:structural constituent of ribosome"/>
    <property type="evidence" value="ECO:0007669"/>
    <property type="project" value="InterPro"/>
</dbReference>
<dbReference type="GO" id="GO:0006412">
    <property type="term" value="P:translation"/>
    <property type="evidence" value="ECO:0007669"/>
    <property type="project" value="InterPro"/>
</dbReference>
<dbReference type="CDD" id="cd01803">
    <property type="entry name" value="Ubl_ubiquitin"/>
    <property type="match status" value="1"/>
</dbReference>
<dbReference type="FunFam" id="3.10.20.90:FF:000014">
    <property type="entry name" value="Ubiquitin-60S ribosomal L40 fusion"/>
    <property type="match status" value="1"/>
</dbReference>
<dbReference type="FunFam" id="4.10.1060.50:FF:000001">
    <property type="entry name" value="ubiquitin-60S ribosomal protein L40"/>
    <property type="match status" value="1"/>
</dbReference>
<dbReference type="Gene3D" id="4.10.1060.50">
    <property type="match status" value="1"/>
</dbReference>
<dbReference type="Gene3D" id="3.10.20.90">
    <property type="entry name" value="Phosphatidylinositol 3-kinase Catalytic Subunit, Chain A, domain 1"/>
    <property type="match status" value="1"/>
</dbReference>
<dbReference type="InterPro" id="IPR001975">
    <property type="entry name" value="Ribosomal_eL40_dom"/>
</dbReference>
<dbReference type="InterPro" id="IPR038587">
    <property type="entry name" value="Ribosomal_eL40_sf"/>
</dbReference>
<dbReference type="InterPro" id="IPR011332">
    <property type="entry name" value="Ribosomal_zn-bd"/>
</dbReference>
<dbReference type="InterPro" id="IPR000626">
    <property type="entry name" value="Ubiquitin-like_dom"/>
</dbReference>
<dbReference type="InterPro" id="IPR029071">
    <property type="entry name" value="Ubiquitin-like_domsf"/>
</dbReference>
<dbReference type="InterPro" id="IPR019956">
    <property type="entry name" value="Ubiquitin_dom"/>
</dbReference>
<dbReference type="InterPro" id="IPR050158">
    <property type="entry name" value="Ubiquitin_ubiquitin-like"/>
</dbReference>
<dbReference type="PANTHER" id="PTHR10666">
    <property type="entry name" value="UBIQUITIN"/>
    <property type="match status" value="1"/>
</dbReference>
<dbReference type="Pfam" id="PF01020">
    <property type="entry name" value="Ribosomal_L40e"/>
    <property type="match status" value="1"/>
</dbReference>
<dbReference type="Pfam" id="PF00240">
    <property type="entry name" value="ubiquitin"/>
    <property type="match status" value="1"/>
</dbReference>
<dbReference type="PRINTS" id="PR00348">
    <property type="entry name" value="UBIQUITIN"/>
</dbReference>
<dbReference type="SMART" id="SM01377">
    <property type="entry name" value="Ribosomal_L40e"/>
    <property type="match status" value="1"/>
</dbReference>
<dbReference type="SMART" id="SM00213">
    <property type="entry name" value="UBQ"/>
    <property type="match status" value="1"/>
</dbReference>
<dbReference type="SUPFAM" id="SSF54236">
    <property type="entry name" value="Ubiquitin-like"/>
    <property type="match status" value="1"/>
</dbReference>
<dbReference type="SUPFAM" id="SSF57829">
    <property type="entry name" value="Zn-binding ribosomal proteins"/>
    <property type="match status" value="1"/>
</dbReference>
<dbReference type="PROSITE" id="PS50053">
    <property type="entry name" value="UBIQUITIN_2"/>
    <property type="match status" value="1"/>
</dbReference>
<proteinExistence type="inferred from homology"/>
<protein>
    <recommendedName>
        <fullName evidence="3">Ubiquitin-ribosomal protein eL40 fusion protein</fullName>
    </recommendedName>
    <component>
        <recommendedName>
            <fullName>Ubiquitin</fullName>
        </recommendedName>
    </component>
    <component>
        <recommendedName>
            <fullName evidence="3">Large ribosomal subunit protein eL40</fullName>
        </recommendedName>
        <alternativeName>
            <fullName>60S ribosomal protein L40</fullName>
        </alternativeName>
        <alternativeName>
            <fullName>CEP52</fullName>
        </alternativeName>
    </component>
</protein>
<organism>
    <name type="scientific">Leishmania tarentolae</name>
    <name type="common">Sauroleishmania tarentolae</name>
    <dbReference type="NCBI Taxonomy" id="5689"/>
    <lineage>
        <taxon>Eukaryota</taxon>
        <taxon>Discoba</taxon>
        <taxon>Euglenozoa</taxon>
        <taxon>Kinetoplastea</taxon>
        <taxon>Metakinetoplastina</taxon>
        <taxon>Trypanosomatida</taxon>
        <taxon>Trypanosomatidae</taxon>
        <taxon>Leishmaniinae</taxon>
        <taxon>Leishmania</taxon>
        <taxon>lizard Leishmania</taxon>
    </lineage>
</organism>
<gene>
    <name type="primary">UB-EP52</name>
</gene>
<keyword id="KW-0963">Cytoplasm</keyword>
<keyword id="KW-1017">Isopeptide bond</keyword>
<keyword id="KW-0539">Nucleus</keyword>
<keyword id="KW-0687">Ribonucleoprotein</keyword>
<keyword id="KW-0689">Ribosomal protein</keyword>
<keyword id="KW-0832">Ubl conjugation</keyword>
<feature type="chain" id="PRO_0000114826" description="Ubiquitin">
    <location>
        <begin position="1"/>
        <end position="76"/>
    </location>
</feature>
<feature type="chain" id="PRO_0000138766" description="Large ribosomal subunit protein eL40">
    <location>
        <begin position="77"/>
        <end position="128"/>
    </location>
</feature>
<feature type="domain" description="Ubiquitin-like" evidence="2">
    <location>
        <begin position="1"/>
        <end position="76"/>
    </location>
</feature>
<feature type="cross-link" description="Glycyl lysine isopeptide (Lys-Gly) (interchain with G-Cter in ubiquitin)" evidence="1">
    <location>
        <position position="48"/>
    </location>
</feature>
<feature type="cross-link" description="Glycyl lysine isopeptide (Gly-Lys) (interchain with K-? in acceptor proteins)" evidence="2">
    <location>
        <position position="76"/>
    </location>
</feature>
<evidence type="ECO:0000250" key="1"/>
<evidence type="ECO:0000255" key="2">
    <source>
        <dbReference type="PROSITE-ProRule" id="PRU00214"/>
    </source>
</evidence>
<evidence type="ECO:0000305" key="3"/>
<comment type="function">
    <molecule>Ubiquitin</molecule>
    <text evidence="1">Exists either covalently attached to another protein, or free (unanchored). When covalently bound, it is conjugated to target proteins via an isopeptide bond either as a monomer (monoubiquitin), a polymer linked via different Lys residues of the ubiquitin (polyubiquitin chains) or a linear polymer linked via the initiator Met of the ubiquitin (linear polyubiquitin chains). Polyubiquitin chains, when attached to a target protein, have different functions depending on the Lys residue of the ubiquitin that is linked: Lys-48-linked is involved in protein degradation via the proteasome. Linear polymer chains formed via attachment by the initiator Met lead to cell signaling. Ubiquitin is usually conjugated to Lys residues of target proteins, however, in rare cases, conjugation to Cys or Ser residues has been observed. When polyubiquitin is free (unanchored-polyubiquitin), it also has distinct roles, such as in activation of protein kinases, and in signaling (By similarity).</text>
</comment>
<comment type="function">
    <molecule>Large ribosomal subunit protein eL40</molecule>
    <text evidence="1">Component of the 60S subunit of the ribosome.</text>
</comment>
<comment type="subunit">
    <molecule>Large ribosomal subunit protein eL40</molecule>
    <text evidence="1">Part of the 60S ribosomal subunit.</text>
</comment>
<comment type="subcellular location">
    <molecule>Ubiquitin</molecule>
    <subcellularLocation>
        <location evidence="1">Cytoplasm</location>
    </subcellularLocation>
    <subcellularLocation>
        <location evidence="1">Nucleus</location>
    </subcellularLocation>
</comment>
<comment type="subcellular location">
    <molecule>Large ribosomal subunit protein eL40</molecule>
    <subcellularLocation>
        <location evidence="1">Cytoplasm</location>
    </subcellularLocation>
</comment>
<comment type="similarity">
    <text evidence="3">In the N-terminal section; belongs to the ubiquitin family.</text>
</comment>
<comment type="similarity">
    <text evidence="3">In the C-terminal section; belongs to the eukaryotic ribosomal protein eL40 family.</text>
</comment>
<sequence>MQIFVKTLTGTTIALEVEPSDTIENVKAKIQDKEGIPPDQQRLIFADKQLEEGRTLSDYNIQKESTLHLVLRLRGGVMEPTLVALAKKYNWEKKVCRRCYARLPVRATNCRKKACGHCSNLRMKKKLR</sequence>
<accession>P69200</accession>
<accession>P49635</accession>
<accession>Q05551</accession>